<comment type="function">
    <text evidence="1">Cell wall formation. Adds enolpyruvyl to UDP-N-acetylglucosamine.</text>
</comment>
<comment type="catalytic activity">
    <reaction evidence="1">
        <text>phosphoenolpyruvate + UDP-N-acetyl-alpha-D-glucosamine = UDP-N-acetyl-3-O-(1-carboxyvinyl)-alpha-D-glucosamine + phosphate</text>
        <dbReference type="Rhea" id="RHEA:18681"/>
        <dbReference type="ChEBI" id="CHEBI:43474"/>
        <dbReference type="ChEBI" id="CHEBI:57705"/>
        <dbReference type="ChEBI" id="CHEBI:58702"/>
        <dbReference type="ChEBI" id="CHEBI:68483"/>
        <dbReference type="EC" id="2.5.1.7"/>
    </reaction>
</comment>
<comment type="pathway">
    <text evidence="1">Cell wall biogenesis; peptidoglycan biosynthesis.</text>
</comment>
<comment type="subcellular location">
    <subcellularLocation>
        <location evidence="1">Cytoplasm</location>
    </subcellularLocation>
</comment>
<comment type="similarity">
    <text evidence="1">Belongs to the EPSP synthase family. MurA subfamily.</text>
</comment>
<sequence>MNQFVIKGSNKLTGDVFISGSKNASLPILFATILSEEEIEIQNVPKIKDTDFAIKLLRYLGATVEENKSIYINAKNISIYHAPCNLVKTMRASIWALGPLLARFGEGSISLPGGCEIGNRPVDLHLYGLKKLGAKIYLKDGYVKANVKGRLHSARIVMNKISVGATLTIMSAATLAIGITIIENAAREPEIIDTANFLISLGAKINGVGTNTIFIKGVKKLKGGVYKILPDRIETGTFLVAAAISRGKITCYDTNPNTLNIVLKKLHESGARIEIGKDWIKLDMIDKRPKAVKIETSPYPGFPTDMQAQFTVLNLISYGSSIITENIFENRFMHISELIKMGGRAIIKNNNIFCYGVNQLFGAQVIAKDLRTAASLIIAGCIADGITTVDCLYHIDRGYCQIENKLKNIGANIKRLKK</sequence>
<keyword id="KW-0131">Cell cycle</keyword>
<keyword id="KW-0132">Cell division</keyword>
<keyword id="KW-0133">Cell shape</keyword>
<keyword id="KW-0961">Cell wall biogenesis/degradation</keyword>
<keyword id="KW-0963">Cytoplasm</keyword>
<keyword id="KW-0573">Peptidoglycan synthesis</keyword>
<keyword id="KW-0670">Pyruvate</keyword>
<keyword id="KW-1185">Reference proteome</keyword>
<keyword id="KW-0808">Transferase</keyword>
<evidence type="ECO:0000255" key="1">
    <source>
        <dbReference type="HAMAP-Rule" id="MF_00111"/>
    </source>
</evidence>
<organism>
    <name type="scientific">Wigglesworthia glossinidia brevipalpis</name>
    <dbReference type="NCBI Taxonomy" id="36870"/>
    <lineage>
        <taxon>Bacteria</taxon>
        <taxon>Pseudomonadati</taxon>
        <taxon>Pseudomonadota</taxon>
        <taxon>Gammaproteobacteria</taxon>
        <taxon>Enterobacterales</taxon>
        <taxon>Erwiniaceae</taxon>
        <taxon>Wigglesworthia</taxon>
    </lineage>
</organism>
<gene>
    <name evidence="1" type="primary">murA</name>
    <name type="ordered locus">WIGBR3290</name>
</gene>
<dbReference type="EC" id="2.5.1.7" evidence="1"/>
<dbReference type="EMBL" id="BA000021">
    <property type="protein sequence ID" value="BAC24475.1"/>
    <property type="molecule type" value="Genomic_DNA"/>
</dbReference>
<dbReference type="SMR" id="Q8D2M5"/>
<dbReference type="STRING" id="36870.gene:10368828"/>
<dbReference type="KEGG" id="wbr:murA"/>
<dbReference type="eggNOG" id="COG0766">
    <property type="taxonomic scope" value="Bacteria"/>
</dbReference>
<dbReference type="HOGENOM" id="CLU_027387_0_0_6"/>
<dbReference type="OrthoDB" id="9803760at2"/>
<dbReference type="UniPathway" id="UPA00219"/>
<dbReference type="Proteomes" id="UP000000562">
    <property type="component" value="Chromosome"/>
</dbReference>
<dbReference type="GO" id="GO:0005737">
    <property type="term" value="C:cytoplasm"/>
    <property type="evidence" value="ECO:0007669"/>
    <property type="project" value="UniProtKB-SubCell"/>
</dbReference>
<dbReference type="GO" id="GO:0008760">
    <property type="term" value="F:UDP-N-acetylglucosamine 1-carboxyvinyltransferase activity"/>
    <property type="evidence" value="ECO:0007669"/>
    <property type="project" value="UniProtKB-UniRule"/>
</dbReference>
<dbReference type="GO" id="GO:0051301">
    <property type="term" value="P:cell division"/>
    <property type="evidence" value="ECO:0007669"/>
    <property type="project" value="UniProtKB-KW"/>
</dbReference>
<dbReference type="GO" id="GO:0071555">
    <property type="term" value="P:cell wall organization"/>
    <property type="evidence" value="ECO:0007669"/>
    <property type="project" value="UniProtKB-KW"/>
</dbReference>
<dbReference type="GO" id="GO:0009252">
    <property type="term" value="P:peptidoglycan biosynthetic process"/>
    <property type="evidence" value="ECO:0007669"/>
    <property type="project" value="UniProtKB-UniRule"/>
</dbReference>
<dbReference type="GO" id="GO:0008360">
    <property type="term" value="P:regulation of cell shape"/>
    <property type="evidence" value="ECO:0007669"/>
    <property type="project" value="UniProtKB-KW"/>
</dbReference>
<dbReference type="GO" id="GO:0019277">
    <property type="term" value="P:UDP-N-acetylgalactosamine biosynthetic process"/>
    <property type="evidence" value="ECO:0007669"/>
    <property type="project" value="InterPro"/>
</dbReference>
<dbReference type="CDD" id="cd01555">
    <property type="entry name" value="UdpNAET"/>
    <property type="match status" value="1"/>
</dbReference>
<dbReference type="FunFam" id="3.65.10.10:FF:000001">
    <property type="entry name" value="UDP-N-acetylglucosamine 1-carboxyvinyltransferase"/>
    <property type="match status" value="1"/>
</dbReference>
<dbReference type="Gene3D" id="3.65.10.10">
    <property type="entry name" value="Enolpyruvate transferase domain"/>
    <property type="match status" value="2"/>
</dbReference>
<dbReference type="HAMAP" id="MF_00111">
    <property type="entry name" value="MurA"/>
    <property type="match status" value="1"/>
</dbReference>
<dbReference type="InterPro" id="IPR001986">
    <property type="entry name" value="Enolpyruvate_Tfrase_dom"/>
</dbReference>
<dbReference type="InterPro" id="IPR036968">
    <property type="entry name" value="Enolpyruvate_Tfrase_sf"/>
</dbReference>
<dbReference type="InterPro" id="IPR050068">
    <property type="entry name" value="MurA_subfamily"/>
</dbReference>
<dbReference type="InterPro" id="IPR013792">
    <property type="entry name" value="RNA3'P_cycl/enolpyr_Trfase_a/b"/>
</dbReference>
<dbReference type="InterPro" id="IPR005750">
    <property type="entry name" value="UDP_GlcNAc_COvinyl_MurA"/>
</dbReference>
<dbReference type="NCBIfam" id="TIGR01072">
    <property type="entry name" value="murA"/>
    <property type="match status" value="1"/>
</dbReference>
<dbReference type="NCBIfam" id="NF006873">
    <property type="entry name" value="PRK09369.1"/>
    <property type="match status" value="1"/>
</dbReference>
<dbReference type="PANTHER" id="PTHR43783">
    <property type="entry name" value="UDP-N-ACETYLGLUCOSAMINE 1-CARBOXYVINYLTRANSFERASE"/>
    <property type="match status" value="1"/>
</dbReference>
<dbReference type="PANTHER" id="PTHR43783:SF1">
    <property type="entry name" value="UDP-N-ACETYLGLUCOSAMINE 1-CARBOXYVINYLTRANSFERASE"/>
    <property type="match status" value="1"/>
</dbReference>
<dbReference type="Pfam" id="PF00275">
    <property type="entry name" value="EPSP_synthase"/>
    <property type="match status" value="1"/>
</dbReference>
<dbReference type="SUPFAM" id="SSF55205">
    <property type="entry name" value="EPT/RTPC-like"/>
    <property type="match status" value="1"/>
</dbReference>
<name>MURA_WIGBR</name>
<proteinExistence type="inferred from homology"/>
<accession>Q8D2M5</accession>
<reference key="1">
    <citation type="journal article" date="2002" name="Nat. Genet.">
        <title>Genome sequence of the endocellular obligate symbiont of tsetse flies, Wigglesworthia glossinidia.</title>
        <authorList>
            <person name="Akman L."/>
            <person name="Yamashita A."/>
            <person name="Watanabe H."/>
            <person name="Oshima K."/>
            <person name="Shiba T."/>
            <person name="Hattori M."/>
            <person name="Aksoy S."/>
        </authorList>
    </citation>
    <scope>NUCLEOTIDE SEQUENCE [LARGE SCALE GENOMIC DNA]</scope>
</reference>
<feature type="chain" id="PRO_0000178952" description="UDP-N-acetylglucosamine 1-carboxyvinyltransferase">
    <location>
        <begin position="1"/>
        <end position="418"/>
    </location>
</feature>
<feature type="active site" description="Proton donor" evidence="1">
    <location>
        <position position="115"/>
    </location>
</feature>
<feature type="binding site" evidence="1">
    <location>
        <begin position="22"/>
        <end position="23"/>
    </location>
    <ligand>
        <name>phosphoenolpyruvate</name>
        <dbReference type="ChEBI" id="CHEBI:58702"/>
    </ligand>
</feature>
<feature type="binding site" evidence="1">
    <location>
        <position position="91"/>
    </location>
    <ligand>
        <name>UDP-N-acetyl-alpha-D-glucosamine</name>
        <dbReference type="ChEBI" id="CHEBI:57705"/>
    </ligand>
</feature>
<feature type="binding site" evidence="1">
    <location>
        <begin position="120"/>
        <end position="124"/>
    </location>
    <ligand>
        <name>UDP-N-acetyl-alpha-D-glucosamine</name>
        <dbReference type="ChEBI" id="CHEBI:57705"/>
    </ligand>
</feature>
<feature type="binding site" evidence="1">
    <location>
        <position position="305"/>
    </location>
    <ligand>
        <name>UDP-N-acetyl-alpha-D-glucosamine</name>
        <dbReference type="ChEBI" id="CHEBI:57705"/>
    </ligand>
</feature>
<feature type="binding site" evidence="1">
    <location>
        <position position="327"/>
    </location>
    <ligand>
        <name>UDP-N-acetyl-alpha-D-glucosamine</name>
        <dbReference type="ChEBI" id="CHEBI:57705"/>
    </ligand>
</feature>
<feature type="modified residue" description="2-(S-cysteinyl)pyruvic acid O-phosphothioketal" evidence="1">
    <location>
        <position position="115"/>
    </location>
</feature>
<protein>
    <recommendedName>
        <fullName evidence="1">UDP-N-acetylglucosamine 1-carboxyvinyltransferase</fullName>
        <ecNumber evidence="1">2.5.1.7</ecNumber>
    </recommendedName>
    <alternativeName>
        <fullName evidence="1">Enoylpyruvate transferase</fullName>
    </alternativeName>
    <alternativeName>
        <fullName evidence="1">UDP-N-acetylglucosamine enolpyruvyl transferase</fullName>
        <shortName evidence="1">EPT</shortName>
    </alternativeName>
</protein>